<reference key="1">
    <citation type="journal article" date="2014" name="Stand. Genomic Sci.">
        <title>Complete genome sequence of Anabaena variabilis ATCC 29413.</title>
        <authorList>
            <person name="Thiel T."/>
            <person name="Pratte B.S."/>
            <person name="Zhong J."/>
            <person name="Goodwin L."/>
            <person name="Copeland A."/>
            <person name="Lucas S."/>
            <person name="Han C."/>
            <person name="Pitluck S."/>
            <person name="Land M.L."/>
            <person name="Kyrpides N.C."/>
            <person name="Woyke T."/>
        </authorList>
    </citation>
    <scope>NUCLEOTIDE SEQUENCE [LARGE SCALE GENOMIC DNA]</scope>
    <source>
        <strain>ATCC 29413 / PCC 7937</strain>
    </source>
</reference>
<protein>
    <recommendedName>
        <fullName evidence="1">Small ribosomal subunit biogenesis GTPase RsgA</fullName>
        <ecNumber evidence="1">3.6.1.-</ecNumber>
    </recommendedName>
</protein>
<comment type="function">
    <text evidence="1">One of several proteins that assist in the late maturation steps of the functional core of the 30S ribosomal subunit. Helps release RbfA from mature subunits. May play a role in the assembly of ribosomal proteins into the subunit. Circularly permuted GTPase that catalyzes slow GTP hydrolysis, GTPase activity is stimulated by the 30S ribosomal subunit.</text>
</comment>
<comment type="cofactor">
    <cofactor evidence="1">
        <name>Zn(2+)</name>
        <dbReference type="ChEBI" id="CHEBI:29105"/>
    </cofactor>
    <text evidence="1">Binds 1 zinc ion per subunit.</text>
</comment>
<comment type="subunit">
    <text evidence="1">Monomer. Associates with 30S ribosomal subunit, binds 16S rRNA.</text>
</comment>
<comment type="subcellular location">
    <subcellularLocation>
        <location evidence="1">Cytoplasm</location>
    </subcellularLocation>
</comment>
<comment type="similarity">
    <text evidence="1">Belongs to the TRAFAC class YlqF/YawG GTPase family. RsgA subfamily.</text>
</comment>
<sequence length="370" mass="41503">MRVFTTGQLLGTVVAVQANFYKVQLDQDVREPGSRGAGEEVHLDSPLPLYPLSLLLCTRRTRLKKIGQQVMVGDRVVVEEPDWAGGRGAIAEVLSRQTQLDRPPIANADQILLVFAVADPPLEPYQLSRFLVKAETTGLDVVLCLNKSDLVSPEIQQQISDRLLAWGYQPLFISVEKQINIDQIAKYLSNKITVVAGPSGVGKSSLINALIPDINLRVGEVSGKLARGRHTTRHVELFELPNGGLLADTPGFNQPDVDCSPEELVHYFPEARERLAVASCRFNDCLHRDEPDCAVRGDWERYEHYLEFLADAIARQTQLYQQADPESTLKLKTKGKGQSQYEPKLESKKYRRTSRRTQVQGLQDLYQEEE</sequence>
<accession>Q3MG79</accession>
<name>RSGA_TRIV2</name>
<evidence type="ECO:0000255" key="1">
    <source>
        <dbReference type="HAMAP-Rule" id="MF_01820"/>
    </source>
</evidence>
<evidence type="ECO:0000255" key="2">
    <source>
        <dbReference type="PROSITE-ProRule" id="PRU01058"/>
    </source>
</evidence>
<evidence type="ECO:0000256" key="3">
    <source>
        <dbReference type="SAM" id="MobiDB-lite"/>
    </source>
</evidence>
<dbReference type="EC" id="3.6.1.-" evidence="1"/>
<dbReference type="EMBL" id="CP000117">
    <property type="protein sequence ID" value="ABA20007.1"/>
    <property type="molecule type" value="Genomic_DNA"/>
</dbReference>
<dbReference type="SMR" id="Q3MG79"/>
<dbReference type="STRING" id="240292.Ava_0381"/>
<dbReference type="KEGG" id="ava:Ava_0381"/>
<dbReference type="eggNOG" id="COG1162">
    <property type="taxonomic scope" value="Bacteria"/>
</dbReference>
<dbReference type="HOGENOM" id="CLU_033617_2_1_3"/>
<dbReference type="Proteomes" id="UP000002533">
    <property type="component" value="Chromosome"/>
</dbReference>
<dbReference type="GO" id="GO:0005737">
    <property type="term" value="C:cytoplasm"/>
    <property type="evidence" value="ECO:0007669"/>
    <property type="project" value="UniProtKB-SubCell"/>
</dbReference>
<dbReference type="GO" id="GO:0005525">
    <property type="term" value="F:GTP binding"/>
    <property type="evidence" value="ECO:0007669"/>
    <property type="project" value="UniProtKB-UniRule"/>
</dbReference>
<dbReference type="GO" id="GO:0003924">
    <property type="term" value="F:GTPase activity"/>
    <property type="evidence" value="ECO:0007669"/>
    <property type="project" value="UniProtKB-UniRule"/>
</dbReference>
<dbReference type="GO" id="GO:0046872">
    <property type="term" value="F:metal ion binding"/>
    <property type="evidence" value="ECO:0007669"/>
    <property type="project" value="UniProtKB-KW"/>
</dbReference>
<dbReference type="GO" id="GO:0019843">
    <property type="term" value="F:rRNA binding"/>
    <property type="evidence" value="ECO:0007669"/>
    <property type="project" value="UniProtKB-KW"/>
</dbReference>
<dbReference type="GO" id="GO:0042274">
    <property type="term" value="P:ribosomal small subunit biogenesis"/>
    <property type="evidence" value="ECO:0007669"/>
    <property type="project" value="UniProtKB-UniRule"/>
</dbReference>
<dbReference type="CDD" id="cd01854">
    <property type="entry name" value="YjeQ_EngC"/>
    <property type="match status" value="1"/>
</dbReference>
<dbReference type="Gene3D" id="2.40.50.140">
    <property type="entry name" value="Nucleic acid-binding proteins"/>
    <property type="match status" value="1"/>
</dbReference>
<dbReference type="Gene3D" id="3.40.50.300">
    <property type="entry name" value="P-loop containing nucleotide triphosphate hydrolases"/>
    <property type="match status" value="1"/>
</dbReference>
<dbReference type="Gene3D" id="1.10.40.50">
    <property type="entry name" value="Probable gtpase engc, domain 3"/>
    <property type="match status" value="1"/>
</dbReference>
<dbReference type="HAMAP" id="MF_01820">
    <property type="entry name" value="GTPase_RsgA"/>
    <property type="match status" value="1"/>
</dbReference>
<dbReference type="InterPro" id="IPR030378">
    <property type="entry name" value="G_CP_dom"/>
</dbReference>
<dbReference type="InterPro" id="IPR012340">
    <property type="entry name" value="NA-bd_OB-fold"/>
</dbReference>
<dbReference type="InterPro" id="IPR027417">
    <property type="entry name" value="P-loop_NTPase"/>
</dbReference>
<dbReference type="InterPro" id="IPR004881">
    <property type="entry name" value="Ribosome_biogen_GTPase_RsgA"/>
</dbReference>
<dbReference type="InterPro" id="IPR010914">
    <property type="entry name" value="RsgA_GTPase_dom"/>
</dbReference>
<dbReference type="NCBIfam" id="NF008932">
    <property type="entry name" value="PRK12289.1"/>
    <property type="match status" value="1"/>
</dbReference>
<dbReference type="NCBIfam" id="TIGR00157">
    <property type="entry name" value="ribosome small subunit-dependent GTPase A"/>
    <property type="match status" value="1"/>
</dbReference>
<dbReference type="PANTHER" id="PTHR32120">
    <property type="entry name" value="SMALL RIBOSOMAL SUBUNIT BIOGENESIS GTPASE RSGA"/>
    <property type="match status" value="1"/>
</dbReference>
<dbReference type="PANTHER" id="PTHR32120:SF11">
    <property type="entry name" value="SMALL RIBOSOMAL SUBUNIT BIOGENESIS GTPASE RSGA 1, MITOCHONDRIAL-RELATED"/>
    <property type="match status" value="1"/>
</dbReference>
<dbReference type="Pfam" id="PF03193">
    <property type="entry name" value="RsgA_GTPase"/>
    <property type="match status" value="1"/>
</dbReference>
<dbReference type="SUPFAM" id="SSF50249">
    <property type="entry name" value="Nucleic acid-binding proteins"/>
    <property type="match status" value="1"/>
</dbReference>
<dbReference type="SUPFAM" id="SSF52540">
    <property type="entry name" value="P-loop containing nucleoside triphosphate hydrolases"/>
    <property type="match status" value="1"/>
</dbReference>
<dbReference type="PROSITE" id="PS50936">
    <property type="entry name" value="ENGC_GTPASE"/>
    <property type="match status" value="1"/>
</dbReference>
<dbReference type="PROSITE" id="PS51721">
    <property type="entry name" value="G_CP"/>
    <property type="match status" value="1"/>
</dbReference>
<gene>
    <name evidence="1" type="primary">rsgA</name>
    <name type="ordered locus">Ava_0381</name>
</gene>
<organism>
    <name type="scientific">Trichormus variabilis (strain ATCC 29413 / PCC 7937)</name>
    <name type="common">Anabaena variabilis</name>
    <dbReference type="NCBI Taxonomy" id="240292"/>
    <lineage>
        <taxon>Bacteria</taxon>
        <taxon>Bacillati</taxon>
        <taxon>Cyanobacteriota</taxon>
        <taxon>Cyanophyceae</taxon>
        <taxon>Nostocales</taxon>
        <taxon>Nostocaceae</taxon>
        <taxon>Trichormus</taxon>
    </lineage>
</organism>
<proteinExistence type="inferred from homology"/>
<keyword id="KW-0963">Cytoplasm</keyword>
<keyword id="KW-0342">GTP-binding</keyword>
<keyword id="KW-0378">Hydrolase</keyword>
<keyword id="KW-0479">Metal-binding</keyword>
<keyword id="KW-0547">Nucleotide-binding</keyword>
<keyword id="KW-0690">Ribosome biogenesis</keyword>
<keyword id="KW-0694">RNA-binding</keyword>
<keyword id="KW-0699">rRNA-binding</keyword>
<keyword id="KW-0862">Zinc</keyword>
<feature type="chain" id="PRO_1000188027" description="Small ribosomal subunit biogenesis GTPase RsgA">
    <location>
        <begin position="1"/>
        <end position="370"/>
    </location>
</feature>
<feature type="domain" description="CP-type G" evidence="2">
    <location>
        <begin position="97"/>
        <end position="255"/>
    </location>
</feature>
<feature type="region of interest" description="Disordered" evidence="3">
    <location>
        <begin position="328"/>
        <end position="370"/>
    </location>
</feature>
<feature type="binding site" evidence="1">
    <location>
        <begin position="146"/>
        <end position="149"/>
    </location>
    <ligand>
        <name>GTP</name>
        <dbReference type="ChEBI" id="CHEBI:37565"/>
    </ligand>
</feature>
<feature type="binding site" evidence="1">
    <location>
        <begin position="197"/>
        <end position="205"/>
    </location>
    <ligand>
        <name>GTP</name>
        <dbReference type="ChEBI" id="CHEBI:37565"/>
    </ligand>
</feature>
<feature type="binding site" evidence="1">
    <location>
        <position position="280"/>
    </location>
    <ligand>
        <name>Zn(2+)</name>
        <dbReference type="ChEBI" id="CHEBI:29105"/>
    </ligand>
</feature>
<feature type="binding site" evidence="1">
    <location>
        <position position="285"/>
    </location>
    <ligand>
        <name>Zn(2+)</name>
        <dbReference type="ChEBI" id="CHEBI:29105"/>
    </ligand>
</feature>
<feature type="binding site" evidence="1">
    <location>
        <position position="287"/>
    </location>
    <ligand>
        <name>Zn(2+)</name>
        <dbReference type="ChEBI" id="CHEBI:29105"/>
    </ligand>
</feature>
<feature type="binding site" evidence="1">
    <location>
        <position position="293"/>
    </location>
    <ligand>
        <name>Zn(2+)</name>
        <dbReference type="ChEBI" id="CHEBI:29105"/>
    </ligand>
</feature>